<gene>
    <name evidence="8" type="primary">Cpne7</name>
</gene>
<protein>
    <recommendedName>
        <fullName evidence="6">Copine-7</fullName>
    </recommendedName>
    <alternativeName>
        <fullName evidence="2 8">Copine VII</fullName>
    </alternativeName>
</protein>
<dbReference type="EMBL" id="BC119328">
    <property type="protein sequence ID" value="AAI19329.1"/>
    <property type="molecule type" value="mRNA"/>
</dbReference>
<dbReference type="EMBL" id="BC137595">
    <property type="protein sequence ID" value="AAI37596.1"/>
    <property type="molecule type" value="mRNA"/>
</dbReference>
<dbReference type="CCDS" id="CCDS22748.1"/>
<dbReference type="RefSeq" id="NP_733785.1">
    <property type="nucleotide sequence ID" value="NM_170684.2"/>
</dbReference>
<dbReference type="SMR" id="Q0VE82"/>
<dbReference type="BioGRID" id="221837">
    <property type="interactions" value="6"/>
</dbReference>
<dbReference type="FunCoup" id="Q0VE82">
    <property type="interactions" value="591"/>
</dbReference>
<dbReference type="IntAct" id="Q0VE82">
    <property type="interactions" value="1"/>
</dbReference>
<dbReference type="STRING" id="10090.ENSMUSP00000042159"/>
<dbReference type="GlyGen" id="Q0VE82">
    <property type="glycosylation" value="1 site, 1 O-linked glycan (1 site)"/>
</dbReference>
<dbReference type="iPTMnet" id="Q0VE82"/>
<dbReference type="PhosphoSitePlus" id="Q0VE82"/>
<dbReference type="jPOST" id="Q0VE82"/>
<dbReference type="PaxDb" id="10090-ENSMUSP00000042159"/>
<dbReference type="PeptideAtlas" id="Q0VE82"/>
<dbReference type="ProteomicsDB" id="278019"/>
<dbReference type="Antibodypedia" id="30877">
    <property type="antibodies" value="55 antibodies from 20 providers"/>
</dbReference>
<dbReference type="DNASU" id="102278"/>
<dbReference type="Ensembl" id="ENSMUST00000037900.9">
    <property type="protein sequence ID" value="ENSMUSP00000042159.9"/>
    <property type="gene ID" value="ENSMUSG00000034796.15"/>
</dbReference>
<dbReference type="GeneID" id="102278"/>
<dbReference type="KEGG" id="mmu:102278"/>
<dbReference type="UCSC" id="uc009nuf.1">
    <property type="organism name" value="mouse"/>
</dbReference>
<dbReference type="AGR" id="MGI:2142747"/>
<dbReference type="CTD" id="27132"/>
<dbReference type="MGI" id="MGI:2142747">
    <property type="gene designation" value="Cpne7"/>
</dbReference>
<dbReference type="VEuPathDB" id="HostDB:ENSMUSG00000034796"/>
<dbReference type="eggNOG" id="KOG1327">
    <property type="taxonomic scope" value="Eukaryota"/>
</dbReference>
<dbReference type="GeneTree" id="ENSGT00940000160442"/>
<dbReference type="HOGENOM" id="CLU_020452_4_0_1"/>
<dbReference type="InParanoid" id="Q0VE82"/>
<dbReference type="OMA" id="CSIGTRD"/>
<dbReference type="OrthoDB" id="5855668at2759"/>
<dbReference type="PhylomeDB" id="Q0VE82"/>
<dbReference type="TreeFam" id="TF316419"/>
<dbReference type="Reactome" id="R-MMU-1483206">
    <property type="pathway name" value="Glycerophospholipid biosynthesis"/>
</dbReference>
<dbReference type="BioGRID-ORCS" id="102278">
    <property type="hits" value="5 hits in 82 CRISPR screens"/>
</dbReference>
<dbReference type="PRO" id="PR:Q0VE82"/>
<dbReference type="Proteomes" id="UP000000589">
    <property type="component" value="Chromosome 8"/>
</dbReference>
<dbReference type="RNAct" id="Q0VE82">
    <property type="molecule type" value="protein"/>
</dbReference>
<dbReference type="Bgee" id="ENSMUSG00000034796">
    <property type="expression patterns" value="Expressed in subiculum and 108 other cell types or tissues"/>
</dbReference>
<dbReference type="GO" id="GO:0005737">
    <property type="term" value="C:cytoplasm"/>
    <property type="evidence" value="ECO:0007669"/>
    <property type="project" value="UniProtKB-SubCell"/>
</dbReference>
<dbReference type="GO" id="GO:0005634">
    <property type="term" value="C:nucleus"/>
    <property type="evidence" value="ECO:0007669"/>
    <property type="project" value="UniProtKB-SubCell"/>
</dbReference>
<dbReference type="GO" id="GO:0005886">
    <property type="term" value="C:plasma membrane"/>
    <property type="evidence" value="ECO:0007669"/>
    <property type="project" value="UniProtKB-SubCell"/>
</dbReference>
<dbReference type="GO" id="GO:0045202">
    <property type="term" value="C:synapse"/>
    <property type="evidence" value="ECO:0000314"/>
    <property type="project" value="SynGO"/>
</dbReference>
<dbReference type="GO" id="GO:0005544">
    <property type="term" value="F:calcium-dependent phospholipid binding"/>
    <property type="evidence" value="ECO:0007669"/>
    <property type="project" value="InterPro"/>
</dbReference>
<dbReference type="GO" id="GO:0046872">
    <property type="term" value="F:metal ion binding"/>
    <property type="evidence" value="ECO:0007669"/>
    <property type="project" value="UniProtKB-KW"/>
</dbReference>
<dbReference type="GO" id="GO:0071277">
    <property type="term" value="P:cellular response to calcium ion"/>
    <property type="evidence" value="ECO:0007669"/>
    <property type="project" value="Ensembl"/>
</dbReference>
<dbReference type="CDD" id="cd04048">
    <property type="entry name" value="C2A_Copine"/>
    <property type="match status" value="1"/>
</dbReference>
<dbReference type="CDD" id="cd04047">
    <property type="entry name" value="C2B_Copine"/>
    <property type="match status" value="1"/>
</dbReference>
<dbReference type="CDD" id="cd01459">
    <property type="entry name" value="vWA_copine_like"/>
    <property type="match status" value="1"/>
</dbReference>
<dbReference type="FunFam" id="3.40.50.410:FF:000042">
    <property type="entry name" value="Copine 4"/>
    <property type="match status" value="1"/>
</dbReference>
<dbReference type="FunFam" id="2.60.40.150:FF:000132">
    <property type="entry name" value="Copine 7"/>
    <property type="match status" value="1"/>
</dbReference>
<dbReference type="FunFam" id="2.60.40.150:FF:000163">
    <property type="entry name" value="Copine 7"/>
    <property type="match status" value="1"/>
</dbReference>
<dbReference type="Gene3D" id="2.60.40.150">
    <property type="entry name" value="C2 domain"/>
    <property type="match status" value="2"/>
</dbReference>
<dbReference type="Gene3D" id="3.40.50.410">
    <property type="entry name" value="von Willebrand factor, type A domain"/>
    <property type="match status" value="1"/>
</dbReference>
<dbReference type="InterPro" id="IPR000008">
    <property type="entry name" value="C2_dom"/>
</dbReference>
<dbReference type="InterPro" id="IPR035892">
    <property type="entry name" value="C2_domain_sf"/>
</dbReference>
<dbReference type="InterPro" id="IPR037768">
    <property type="entry name" value="C2B_Copine"/>
</dbReference>
<dbReference type="InterPro" id="IPR045052">
    <property type="entry name" value="Copine"/>
</dbReference>
<dbReference type="InterPro" id="IPR010734">
    <property type="entry name" value="Copine_C"/>
</dbReference>
<dbReference type="InterPro" id="IPR002035">
    <property type="entry name" value="VWF_A"/>
</dbReference>
<dbReference type="InterPro" id="IPR036465">
    <property type="entry name" value="vWFA_dom_sf"/>
</dbReference>
<dbReference type="PANTHER" id="PTHR10857">
    <property type="entry name" value="COPINE"/>
    <property type="match status" value="1"/>
</dbReference>
<dbReference type="PANTHER" id="PTHR10857:SF6">
    <property type="entry name" value="COPINE-7"/>
    <property type="match status" value="1"/>
</dbReference>
<dbReference type="Pfam" id="PF00168">
    <property type="entry name" value="C2"/>
    <property type="match status" value="2"/>
</dbReference>
<dbReference type="Pfam" id="PF07002">
    <property type="entry name" value="Copine"/>
    <property type="match status" value="1"/>
</dbReference>
<dbReference type="SMART" id="SM00239">
    <property type="entry name" value="C2"/>
    <property type="match status" value="2"/>
</dbReference>
<dbReference type="SMART" id="SM00327">
    <property type="entry name" value="VWA"/>
    <property type="match status" value="1"/>
</dbReference>
<dbReference type="SUPFAM" id="SSF49562">
    <property type="entry name" value="C2 domain (Calcium/lipid-binding domain, CaLB)"/>
    <property type="match status" value="2"/>
</dbReference>
<dbReference type="SUPFAM" id="SSF53300">
    <property type="entry name" value="vWA-like"/>
    <property type="match status" value="1"/>
</dbReference>
<dbReference type="PROSITE" id="PS50004">
    <property type="entry name" value="C2"/>
    <property type="match status" value="2"/>
</dbReference>
<dbReference type="PROSITE" id="PS50234">
    <property type="entry name" value="VWFA"/>
    <property type="match status" value="1"/>
</dbReference>
<organism>
    <name type="scientific">Mus musculus</name>
    <name type="common">Mouse</name>
    <dbReference type="NCBI Taxonomy" id="10090"/>
    <lineage>
        <taxon>Eukaryota</taxon>
        <taxon>Metazoa</taxon>
        <taxon>Chordata</taxon>
        <taxon>Craniata</taxon>
        <taxon>Vertebrata</taxon>
        <taxon>Euteleostomi</taxon>
        <taxon>Mammalia</taxon>
        <taxon>Eutheria</taxon>
        <taxon>Euarchontoglires</taxon>
        <taxon>Glires</taxon>
        <taxon>Rodentia</taxon>
        <taxon>Myomorpha</taxon>
        <taxon>Muroidea</taxon>
        <taxon>Muridae</taxon>
        <taxon>Murinae</taxon>
        <taxon>Mus</taxon>
        <taxon>Mus</taxon>
    </lineage>
</organism>
<proteinExistence type="evidence at protein level"/>
<name>CPNE7_MOUSE</name>
<sequence>MSGDSERAVAPGVVPAPCASKVELRLSCRHLLDRDPLTKSDPSVVLLQQAQGQWLQVDRTEVVKSSLHPVFSKVFTVDYYFEGVQKLRFEVYDTHGPSGLTCQDDDFLGGMECTLGQIVAQKKMTRPLLLRFGRNAGKSTITVIAEDISGNNGYVELSFQARKLDDKDLFSKSDPFLELYRVNDDGSEQLVYRTEVVKNNLNPVWEPFKVSLNSLCSCEETRPLKCLVWDYDSRGKHDFIGDFTTTFAEMQKAFEEEQQAQWDCVNAKYKQKKRNYKNSGVVILADLKLHRVHSFLDYIMGGCQIHCTVAIDFTASNGDPRNSCSLHHINPYQPNEYLRALVAVGEVCQDYDSDKRFSALGFGARIPPKYEVSHDFAINFNPEDDECEGIQGVVEAYQNCLPKVQLYGPTNVAPIISKVARMAAAEESTGEASQYYILLILTDGVVTDMSDTREAIVRASHLPMSVIIVGVGNADFTDMQILDGDDGVLRSPRGEPALRDIVQFVPFRELKNASPAALAKCVLAEVPKQVVEYYSHKELPPRSLGAQTGEAAASSAP</sequence>
<accession>Q0VE82</accession>
<comment type="function">
    <text evidence="2">Calcium-dependent phospholipid-binding protein that may play a role in calcium-mediated intracellular processes.</text>
</comment>
<comment type="cofactor">
    <cofactor evidence="4">
        <name>Ca(2+)</name>
        <dbReference type="ChEBI" id="CHEBI:29108"/>
    </cofactor>
</comment>
<comment type="subcellular location">
    <subcellularLocation>
        <location evidence="3">Cytoplasm</location>
    </subcellularLocation>
    <subcellularLocation>
        <location evidence="3">Nucleus</location>
    </subcellularLocation>
    <subcellularLocation>
        <location evidence="3">Cell membrane</location>
    </subcellularLocation>
    <text evidence="3">Translocates to the cell membrane in a calcium-dependent manner.</text>
</comment>
<comment type="domain">
    <text evidence="1">The C2 domain 1 is not necessary for calcium-mediated translocation and association to the plasma membrane. The C2 domain 2 is necessary for calcium-mediated translocation and association to the plasma membrane.</text>
</comment>
<comment type="similarity">
    <text evidence="6">Belongs to the copine family.</text>
</comment>
<keyword id="KW-0106">Calcium</keyword>
<keyword id="KW-1003">Cell membrane</keyword>
<keyword id="KW-0963">Cytoplasm</keyword>
<keyword id="KW-0472">Membrane</keyword>
<keyword id="KW-0479">Metal-binding</keyword>
<keyword id="KW-0539">Nucleus</keyword>
<keyword id="KW-1185">Reference proteome</keyword>
<keyword id="KW-0677">Repeat</keyword>
<feature type="chain" id="PRO_0000375983" description="Copine-7">
    <location>
        <begin position="1"/>
        <end position="557"/>
    </location>
</feature>
<feature type="domain" description="C2 1" evidence="4">
    <location>
        <begin position="1"/>
        <end position="128"/>
    </location>
</feature>
<feature type="domain" description="C2 2" evidence="4">
    <location>
        <begin position="135"/>
        <end position="263"/>
    </location>
</feature>
<feature type="domain" description="VWFA" evidence="5">
    <location>
        <begin position="306"/>
        <end position="505"/>
    </location>
</feature>
<feature type="binding site" evidence="4">
    <location>
        <position position="168"/>
    </location>
    <ligand>
        <name>Ca(2+)</name>
        <dbReference type="ChEBI" id="CHEBI:29108"/>
        <label>1</label>
    </ligand>
</feature>
<feature type="binding site" evidence="4">
    <location>
        <position position="168"/>
    </location>
    <ligand>
        <name>Ca(2+)</name>
        <dbReference type="ChEBI" id="CHEBI:29108"/>
        <label>2</label>
    </ligand>
</feature>
<feature type="binding site" evidence="4">
    <location>
        <position position="174"/>
    </location>
    <ligand>
        <name>Ca(2+)</name>
        <dbReference type="ChEBI" id="CHEBI:29108"/>
        <label>1</label>
    </ligand>
</feature>
<feature type="binding site" evidence="4">
    <location>
        <position position="230"/>
    </location>
    <ligand>
        <name>Ca(2+)</name>
        <dbReference type="ChEBI" id="CHEBI:29108"/>
        <label>1</label>
    </ligand>
</feature>
<feature type="binding site" evidence="4">
    <location>
        <position position="230"/>
    </location>
    <ligand>
        <name>Ca(2+)</name>
        <dbReference type="ChEBI" id="CHEBI:29108"/>
        <label>2</label>
    </ligand>
</feature>
<feature type="binding site" evidence="4">
    <location>
        <position position="232"/>
    </location>
    <ligand>
        <name>Ca(2+)</name>
        <dbReference type="ChEBI" id="CHEBI:29108"/>
        <label>1</label>
    </ligand>
</feature>
<feature type="binding site" evidence="4">
    <location>
        <position position="232"/>
    </location>
    <ligand>
        <name>Ca(2+)</name>
        <dbReference type="ChEBI" id="CHEBI:29108"/>
        <label>2</label>
    </ligand>
</feature>
<feature type="binding site" evidence="4">
    <location>
        <position position="238"/>
    </location>
    <ligand>
        <name>Ca(2+)</name>
        <dbReference type="ChEBI" id="CHEBI:29108"/>
        <label>2</label>
    </ligand>
</feature>
<evidence type="ECO:0000250" key="1">
    <source>
        <dbReference type="UniProtKB" id="H1UBN0"/>
    </source>
</evidence>
<evidence type="ECO:0000250" key="2">
    <source>
        <dbReference type="UniProtKB" id="Q99829"/>
    </source>
</evidence>
<evidence type="ECO:0000250" key="3">
    <source>
        <dbReference type="UniProtKB" id="Q9UBL6"/>
    </source>
</evidence>
<evidence type="ECO:0000255" key="4">
    <source>
        <dbReference type="PROSITE-ProRule" id="PRU00041"/>
    </source>
</evidence>
<evidence type="ECO:0000255" key="5">
    <source>
        <dbReference type="PROSITE-ProRule" id="PRU00219"/>
    </source>
</evidence>
<evidence type="ECO:0000305" key="6"/>
<evidence type="ECO:0000312" key="7">
    <source>
        <dbReference type="EMBL" id="AAI19329.1"/>
    </source>
</evidence>
<evidence type="ECO:0000312" key="8">
    <source>
        <dbReference type="MGI" id="MGI:2142747"/>
    </source>
</evidence>
<reference evidence="7" key="1">
    <citation type="journal article" date="2004" name="Genome Res.">
        <title>The status, quality, and expansion of the NIH full-length cDNA project: the Mammalian Gene Collection (MGC).</title>
        <authorList>
            <consortium name="The MGC Project Team"/>
        </authorList>
    </citation>
    <scope>NUCLEOTIDE SEQUENCE [LARGE SCALE MRNA]</scope>
    <source>
        <tissue evidence="7">Brain</tissue>
    </source>
</reference>
<reference key="2">
    <citation type="journal article" date="2010" name="Cell">
        <title>A tissue-specific atlas of mouse protein phosphorylation and expression.</title>
        <authorList>
            <person name="Huttlin E.L."/>
            <person name="Jedrychowski M.P."/>
            <person name="Elias J.E."/>
            <person name="Goswami T."/>
            <person name="Rad R."/>
            <person name="Beausoleil S.A."/>
            <person name="Villen J."/>
            <person name="Haas W."/>
            <person name="Sowa M.E."/>
            <person name="Gygi S.P."/>
        </authorList>
    </citation>
    <scope>IDENTIFICATION BY MASS SPECTROMETRY [LARGE SCALE ANALYSIS]</scope>
    <source>
        <tissue>Brain</tissue>
    </source>
</reference>